<feature type="chain" id="PRO_1000185682" description="Carboxy-S-adenosyl-L-methionine synthase">
    <location>
        <begin position="1"/>
        <end position="234"/>
    </location>
</feature>
<feature type="binding site" evidence="1">
    <location>
        <position position="35"/>
    </location>
    <ligand>
        <name>S-adenosyl-L-methionine</name>
        <dbReference type="ChEBI" id="CHEBI:59789"/>
    </ligand>
</feature>
<feature type="binding site" evidence="1">
    <location>
        <begin position="60"/>
        <end position="62"/>
    </location>
    <ligand>
        <name>S-adenosyl-L-methionine</name>
        <dbReference type="ChEBI" id="CHEBI:59789"/>
    </ligand>
</feature>
<feature type="binding site" evidence="1">
    <location>
        <begin position="83"/>
        <end position="84"/>
    </location>
    <ligand>
        <name>S-adenosyl-L-methionine</name>
        <dbReference type="ChEBI" id="CHEBI:59789"/>
    </ligand>
</feature>
<feature type="binding site" evidence="1">
    <location>
        <position position="191"/>
    </location>
    <ligand>
        <name>S-adenosyl-L-methionine</name>
        <dbReference type="ChEBI" id="CHEBI:59789"/>
    </ligand>
</feature>
<accession>B9KG20</accession>
<reference key="1">
    <citation type="journal article" date="2008" name="Foodborne Pathog. Dis.">
        <title>The complete genome sequence and analysis of the human pathogen Campylobacter lari.</title>
        <authorList>
            <person name="Miller W.G."/>
            <person name="Wang G."/>
            <person name="Binnewies T.T."/>
            <person name="Parker C.T."/>
        </authorList>
    </citation>
    <scope>NUCLEOTIDE SEQUENCE [LARGE SCALE GENOMIC DNA]</scope>
    <source>
        <strain>RM2100 / D67 / ATCC BAA-1060</strain>
    </source>
</reference>
<comment type="function">
    <text evidence="1">Catalyzes the conversion of S-adenosyl-L-methionine (SAM) to carboxy-S-adenosyl-L-methionine (Cx-SAM).</text>
</comment>
<comment type="catalytic activity">
    <reaction evidence="1">
        <text>prephenate + S-adenosyl-L-methionine = carboxy-S-adenosyl-L-methionine + 3-phenylpyruvate + H2O</text>
        <dbReference type="Rhea" id="RHEA:51692"/>
        <dbReference type="ChEBI" id="CHEBI:15377"/>
        <dbReference type="ChEBI" id="CHEBI:18005"/>
        <dbReference type="ChEBI" id="CHEBI:29934"/>
        <dbReference type="ChEBI" id="CHEBI:59789"/>
        <dbReference type="ChEBI" id="CHEBI:134278"/>
    </reaction>
</comment>
<comment type="subunit">
    <text evidence="1">Homodimer.</text>
</comment>
<comment type="similarity">
    <text evidence="1">Belongs to the class I-like SAM-binding methyltransferase superfamily. Cx-SAM synthase family.</text>
</comment>
<organism>
    <name type="scientific">Campylobacter lari (strain RM2100 / D67 / ATCC BAA-1060)</name>
    <dbReference type="NCBI Taxonomy" id="306263"/>
    <lineage>
        <taxon>Bacteria</taxon>
        <taxon>Pseudomonadati</taxon>
        <taxon>Campylobacterota</taxon>
        <taxon>Epsilonproteobacteria</taxon>
        <taxon>Campylobacterales</taxon>
        <taxon>Campylobacteraceae</taxon>
        <taxon>Campylobacter</taxon>
    </lineage>
</organism>
<proteinExistence type="inferred from homology"/>
<keyword id="KW-1185">Reference proteome</keyword>
<keyword id="KW-0949">S-adenosyl-L-methionine</keyword>
<keyword id="KW-0808">Transferase</keyword>
<protein>
    <recommendedName>
        <fullName evidence="1">Carboxy-S-adenosyl-L-methionine synthase</fullName>
        <shortName evidence="1">Cx-SAM synthase</shortName>
        <ecNumber evidence="1">2.1.3.-</ecNumber>
    </recommendedName>
</protein>
<name>CMOA_CAMLR</name>
<sequence length="234" mass="27193">MKDEIFKKPLEKQFEFDANVASVFDDMVARSVPFYAQNLKLITQLITHFAPQNAKICDLGCSTASLLLALFEKRKDLQLSGVDNAKAMLDIARNKTSAFGARVDFYEQNLDEFSFFKNDVFVATYTMQFIRPPKRQEIIDKIYQNLNDGGIFIMSEKILYEDVKISKKMIEIYENYKQDQGYSKLEIATKREALENILIPYTQNENINMLKNSGFKIIESVFKWVNFETFVAFK</sequence>
<gene>
    <name evidence="1" type="primary">cmoA</name>
    <name type="ordered locus">Cla_0676</name>
</gene>
<dbReference type="EC" id="2.1.3.-" evidence="1"/>
<dbReference type="EMBL" id="CP000932">
    <property type="protein sequence ID" value="ACM64005.1"/>
    <property type="molecule type" value="Genomic_DNA"/>
</dbReference>
<dbReference type="RefSeq" id="WP_012661388.1">
    <property type="nucleotide sequence ID" value="NC_012039.1"/>
</dbReference>
<dbReference type="SMR" id="B9KG20"/>
<dbReference type="STRING" id="306263.Cla_0676"/>
<dbReference type="KEGG" id="cla:CLA_0676"/>
<dbReference type="PATRIC" id="fig|306263.5.peg.656"/>
<dbReference type="eggNOG" id="COG2890">
    <property type="taxonomic scope" value="Bacteria"/>
</dbReference>
<dbReference type="HOGENOM" id="CLU_078475_0_0_7"/>
<dbReference type="Proteomes" id="UP000007727">
    <property type="component" value="Chromosome"/>
</dbReference>
<dbReference type="GO" id="GO:0016743">
    <property type="term" value="F:carboxyl- or carbamoyltransferase activity"/>
    <property type="evidence" value="ECO:0007669"/>
    <property type="project" value="UniProtKB-UniRule"/>
</dbReference>
<dbReference type="GO" id="GO:1904047">
    <property type="term" value="F:S-adenosyl-L-methionine binding"/>
    <property type="evidence" value="ECO:0007669"/>
    <property type="project" value="UniProtKB-UniRule"/>
</dbReference>
<dbReference type="GO" id="GO:0002098">
    <property type="term" value="P:tRNA wobble uridine modification"/>
    <property type="evidence" value="ECO:0007669"/>
    <property type="project" value="InterPro"/>
</dbReference>
<dbReference type="CDD" id="cd02440">
    <property type="entry name" value="AdoMet_MTases"/>
    <property type="match status" value="1"/>
</dbReference>
<dbReference type="Gene3D" id="3.40.50.150">
    <property type="entry name" value="Vaccinia Virus protein VP39"/>
    <property type="match status" value="1"/>
</dbReference>
<dbReference type="HAMAP" id="MF_01589">
    <property type="entry name" value="Cx_SAM_synthase"/>
    <property type="match status" value="1"/>
</dbReference>
<dbReference type="InterPro" id="IPR005271">
    <property type="entry name" value="CmoA"/>
</dbReference>
<dbReference type="InterPro" id="IPR041698">
    <property type="entry name" value="Methyltransf_25"/>
</dbReference>
<dbReference type="InterPro" id="IPR029063">
    <property type="entry name" value="SAM-dependent_MTases_sf"/>
</dbReference>
<dbReference type="NCBIfam" id="TIGR00740">
    <property type="entry name" value="carboxy-S-adenosyl-L-methionine synthase CmoA"/>
    <property type="match status" value="1"/>
</dbReference>
<dbReference type="PANTHER" id="PTHR43861:SF2">
    <property type="entry name" value="CARBOXY-S-ADENOSYL-L-METHIONINE SYNTHASE"/>
    <property type="match status" value="1"/>
</dbReference>
<dbReference type="PANTHER" id="PTHR43861">
    <property type="entry name" value="TRANS-ACONITATE 2-METHYLTRANSFERASE-RELATED"/>
    <property type="match status" value="1"/>
</dbReference>
<dbReference type="Pfam" id="PF13649">
    <property type="entry name" value="Methyltransf_25"/>
    <property type="match status" value="1"/>
</dbReference>
<dbReference type="PIRSF" id="PIRSF006325">
    <property type="entry name" value="MeTrfase_bac"/>
    <property type="match status" value="1"/>
</dbReference>
<dbReference type="SUPFAM" id="SSF53335">
    <property type="entry name" value="S-adenosyl-L-methionine-dependent methyltransferases"/>
    <property type="match status" value="1"/>
</dbReference>
<evidence type="ECO:0000255" key="1">
    <source>
        <dbReference type="HAMAP-Rule" id="MF_01589"/>
    </source>
</evidence>